<proteinExistence type="evidence at protein level"/>
<sequence>MRLQCVVLFAALTLVAATHAPPNVKTVLSAEQHDIPVKRLLRPGNPAGKEDEERGINFSSVPGFEKLANLLKPKPGLKKLLKWADAKKPPETVFTRLRLDKTGTQLFDNTDFPVWAAYTRSVAQTDSEASAVMLKTLVSRYSDEVLSGMIAAAKKSSKTESIATKLETEQMRTWLAAKKTPDDMFLVFKLNKAGDDILSSPLLSAWTNYMKLSNKENPKAQTTLIATMTKHYGDSGVSQILAAARKSPATQSTAKRLEAEQVQLWLKKGRTPDDTFTLLSLDRAGDDLLASPQFNTWMKYINYYNKENPDEKTTVLAKLMTHFDDEELTPILVVARKVPSTESTAAKLQAEQFKNWLSADKSPEEAFTLLQLDKAGDDLLTNPQLTNWLKYTENFNLNKEINEQVTAIQVFRAQYVDDSRIANMVIAAEKVPNTQAIAKRVEDELFKGWTVVLNKPDDVFINLKLETVGENVFESPLWSFYTKFLEKYNTANPGKEQTMISGLARGYNDVTLTNMLLKAKEAPSTKTLATKLEDELVQYWLADKKLPDKLFGYLELKESVDGILTNPVFNVWLKYLNAFNDKAPVKKALMIDTLKSAFGDVAVSNMLFAAKKDPGTAKVAATLQTALLSKWVLEKKTPGQVSAILKEGAGADVSAKLLATYSAKFKVRWG</sequence>
<gene>
    <name evidence="8" type="primary">PSR2</name>
    <name evidence="7" type="synonym">Avh146</name>
    <name type="ORF">PHYSODRAFT_289089</name>
</gene>
<accession>G5ADB3</accession>
<evidence type="ECO:0000250" key="1">
    <source>
        <dbReference type="UniProtKB" id="E0W4V5"/>
    </source>
</evidence>
<evidence type="ECO:0000255" key="2"/>
<evidence type="ECO:0000255" key="3">
    <source>
        <dbReference type="PROSITE-ProRule" id="PRU00498"/>
    </source>
</evidence>
<evidence type="ECO:0000269" key="4">
    <source>
    </source>
</evidence>
<evidence type="ECO:0000269" key="5">
    <source>
    </source>
</evidence>
<evidence type="ECO:0000269" key="6">
    <source>
    </source>
</evidence>
<evidence type="ECO:0000303" key="7">
    <source>
    </source>
</evidence>
<evidence type="ECO:0000303" key="8">
    <source>
    </source>
</evidence>
<evidence type="ECO:0000305" key="9"/>
<evidence type="ECO:0000305" key="10">
    <source>
    </source>
</evidence>
<evidence type="ECO:0000305" key="11">
    <source>
    </source>
</evidence>
<name>PSR2_PHYSP</name>
<comment type="function">
    <text evidence="4 5 6">Secreted effector that possesses RNA silencing suppression activity by inhibiting the biogenesis of small RNAs in the host plant to promote enhanced susceptibility of host to the pathogen during infection (PubMed:23377181, PubMed:25387135, PubMed:30595554). Interferes with secondary siRNA production by associating with host dsRNA-binding protein DRB4 (PubMed:30595554). Inhibits the host salicylic acid pathway during infection (PubMed:25387135).</text>
</comment>
<comment type="subunit">
    <text evidence="6">Interacts with host dsRNA-binding protein DRB4.</text>
</comment>
<comment type="subcellular location">
    <subcellularLocation>
        <location evidence="11">Secreted</location>
    </subcellularLocation>
    <subcellularLocation>
        <location evidence="11">Host cell</location>
    </subcellularLocation>
</comment>
<comment type="induction">
    <text evidence="5">Expressed at specific infection stages in a transient manner (PubMed:25387135). Is not expressed until 24 hours post-infection (hpi) but quickly reaches the maximum expression level at approximately 36 hpi (PubMed:25387135). The abundance of transcripts exhibits a more than twofold decrease at 48 hpi (PubMed:25387135).</text>
</comment>
<comment type="domain">
    <text evidence="10">The RxLR-dEER motif acts to carry the protein into the host cell cytoplasm through binding to cell surface phosphatidylinositol-3-phosphate.</text>
</comment>
<comment type="domain">
    <text evidence="1 6">The C-terminal region (residues 79 to 670) consists of seven imperfect tandem repeats, including one W-Y motif (WY1) and six L-W-Y motifs (LWY2 to LWY7) (By similarity). WY1 forms a 3 alpha-helix fold with one hydrophobic core and each L-W-Y motif forms a highly conserved fold consisting of 5 alpha-helices (By similarity). The units contribute differently to the virulence since WY1, LWY2 and LWY6 are important for the ability to suppress the biogenesis of small RNA in host and virulence activity of the pathogen, whereas LWY3, LWY4, LWY5 and LWY7 are dispensable for PSR2 function (By similarity). WY1 and LWY2 are sufficient for association with DRB4, suppress gene silencing and promote infection (PubMed:30595554). These units may function as basic building blocks of Phytophthora effectors to enable virulence activity and accelerate the evolution of novel functions (By similarity).</text>
</comment>
<comment type="disruption phenotype">
    <text evidence="4">Exhibits significantly decreased virulence when infecting soybean seedlings.</text>
</comment>
<comment type="similarity">
    <text evidence="9">Belongs to the RxLR effector family.</text>
</comment>
<protein>
    <recommendedName>
        <fullName evidence="7">RxLR effector protein PSR2</fullName>
    </recommendedName>
    <alternativeName>
        <fullName evidence="7">Avirulence homolog protein 146</fullName>
    </alternativeName>
    <alternativeName>
        <fullName evidence="8">Suppressor of RNA silencing protein 2</fullName>
    </alternativeName>
</protein>
<dbReference type="EMBL" id="JH159164">
    <property type="protein sequence ID" value="EGZ06166.1"/>
    <property type="molecule type" value="Genomic_DNA"/>
</dbReference>
<dbReference type="RefSeq" id="XP_009538063.1">
    <property type="nucleotide sequence ID" value="XM_009539768.1"/>
</dbReference>
<dbReference type="SMR" id="G5ADB3"/>
<dbReference type="STRING" id="1094619.G5ADB3"/>
<dbReference type="GlyCosmos" id="G5ADB3">
    <property type="glycosylation" value="1 site, No reported glycans"/>
</dbReference>
<dbReference type="EnsemblProtists" id="EGZ06166">
    <property type="protein sequence ID" value="EGZ06166"/>
    <property type="gene ID" value="PHYSODRAFT_289089"/>
</dbReference>
<dbReference type="GeneID" id="20640800"/>
<dbReference type="KEGG" id="psoj:PHYSODRAFT_289089"/>
<dbReference type="InParanoid" id="G5ADB3"/>
<dbReference type="OMA" id="TLYMKTD"/>
<dbReference type="PHI-base" id="PHI:3353"/>
<dbReference type="Proteomes" id="UP000002640">
    <property type="component" value="Unassembled WGS sequence"/>
</dbReference>
<dbReference type="GO" id="GO:0005576">
    <property type="term" value="C:extracellular region"/>
    <property type="evidence" value="ECO:0007669"/>
    <property type="project" value="UniProtKB-SubCell"/>
</dbReference>
<dbReference type="GO" id="GO:0043657">
    <property type="term" value="C:host cell"/>
    <property type="evidence" value="ECO:0007669"/>
    <property type="project" value="UniProtKB-SubCell"/>
</dbReference>
<dbReference type="InterPro" id="IPR054463">
    <property type="entry name" value="PexRD54_WY"/>
</dbReference>
<dbReference type="Pfam" id="PF22748">
    <property type="entry name" value="PexRD54_WY"/>
    <property type="match status" value="2"/>
</dbReference>
<keyword id="KW-0325">Glycoprotein</keyword>
<keyword id="KW-1185">Reference proteome</keyword>
<keyword id="KW-0677">Repeat</keyword>
<keyword id="KW-0964">Secreted</keyword>
<keyword id="KW-0732">Signal</keyword>
<keyword id="KW-0843">Virulence</keyword>
<feature type="signal peptide" evidence="2">
    <location>
        <begin position="1"/>
        <end position="17"/>
    </location>
</feature>
<feature type="chain" id="PRO_5003473269" description="RxLR effector protein PSR2">
    <location>
        <begin position="18"/>
        <end position="670"/>
    </location>
</feature>
<feature type="repeat" description="WY1" evidence="1">
    <location>
        <begin position="79"/>
        <end position="126"/>
    </location>
</feature>
<feature type="repeat" description="LWY2" evidence="1">
    <location>
        <begin position="127"/>
        <end position="217"/>
    </location>
</feature>
<feature type="repeat" description="LWY3" evidence="1">
    <location>
        <begin position="218"/>
        <end position="308"/>
    </location>
</feature>
<feature type="repeat" description="LWY4" evidence="1">
    <location>
        <begin position="309"/>
        <end position="399"/>
    </location>
</feature>
<feature type="repeat" description="LWY5" evidence="1">
    <location>
        <begin position="400"/>
        <end position="492"/>
    </location>
</feature>
<feature type="repeat" description="LWY6" evidence="1">
    <location>
        <begin position="493"/>
        <end position="583"/>
    </location>
</feature>
<feature type="repeat" description="LWY7" evidence="1">
    <location>
        <begin position="584"/>
        <end position="670"/>
    </location>
</feature>
<feature type="region of interest" description="7 X 93 AA tandem repeats" evidence="1">
    <location>
        <begin position="79"/>
        <end position="670"/>
    </location>
</feature>
<feature type="short sequence motif" description="RxLR-dEER" evidence="10">
    <location>
        <begin position="39"/>
        <end position="54"/>
    </location>
</feature>
<feature type="glycosylation site" description="N-linked (GlcNAc...) asparagine" evidence="3">
    <location>
        <position position="57"/>
    </location>
</feature>
<reference key="1">
    <citation type="journal article" date="2006" name="Science">
        <title>Phytophthora genome sequences uncover evolutionary origins and mechanisms of pathogenesis.</title>
        <authorList>
            <person name="Tyler B.M."/>
            <person name="Tripathy S."/>
            <person name="Zhang X."/>
            <person name="Dehal P."/>
            <person name="Jiang R.H.Y."/>
            <person name="Aerts A."/>
            <person name="Arredondo F.D."/>
            <person name="Baxter L."/>
            <person name="Bensasson D."/>
            <person name="Beynon J.L."/>
            <person name="Chapman J."/>
            <person name="Damasceno C.M.B."/>
            <person name="Dorrance A.E."/>
            <person name="Dou D."/>
            <person name="Dickerman A.W."/>
            <person name="Dubchak I.L."/>
            <person name="Garbelotto M."/>
            <person name="Gijzen M."/>
            <person name="Gordon S.G."/>
            <person name="Govers F."/>
            <person name="Grunwald N.J."/>
            <person name="Huang W."/>
            <person name="Ivors K.L."/>
            <person name="Jones R.W."/>
            <person name="Kamoun S."/>
            <person name="Krampis K."/>
            <person name="Lamour K.H."/>
            <person name="Lee M.-K."/>
            <person name="McDonald W.H."/>
            <person name="Medina M."/>
            <person name="Meijer H.J.G."/>
            <person name="Nordberg E.K."/>
            <person name="Maclean D.J."/>
            <person name="Ospina-Giraldo M.D."/>
            <person name="Morris P.F."/>
            <person name="Phuntumart V."/>
            <person name="Putnam N.H."/>
            <person name="Rash S."/>
            <person name="Rose J.K.C."/>
            <person name="Sakihama Y."/>
            <person name="Salamov A.A."/>
            <person name="Savidor A."/>
            <person name="Scheuring C.F."/>
            <person name="Smith B.M."/>
            <person name="Sobral B.W.S."/>
            <person name="Terry A."/>
            <person name="Torto-Alalibo T.A."/>
            <person name="Win J."/>
            <person name="Xu Z."/>
            <person name="Zhang H."/>
            <person name="Grigoriev I.V."/>
            <person name="Rokhsar D.S."/>
            <person name="Boore J.L."/>
        </authorList>
    </citation>
    <scope>NUCLEOTIDE SEQUENCE [LARGE SCALE GENOMIC DNA]</scope>
    <source>
        <strain>P6497</strain>
    </source>
</reference>
<reference key="2">
    <citation type="journal article" date="2011" name="Plant Cell">
        <title>Transcriptional programming and functional interactions within the Phytophthora sojae RXLR effector repertoire.</title>
        <authorList>
            <person name="Wang Q."/>
            <person name="Han C."/>
            <person name="Ferreira A.O."/>
            <person name="Yu X."/>
            <person name="Ye W."/>
            <person name="Tripathy S."/>
            <person name="Kale S.D."/>
            <person name="Gu B."/>
            <person name="Sheng Y."/>
            <person name="Sui Y."/>
            <person name="Wang X."/>
            <person name="Zhang Z."/>
            <person name="Cheng B."/>
            <person name="Dong S."/>
            <person name="Shan W."/>
            <person name="Zheng X."/>
            <person name="Dou D."/>
            <person name="Tyler B.M."/>
            <person name="Wang Y."/>
        </authorList>
    </citation>
    <scope>IDENTIFICATION</scope>
    <scope>DOMAIN</scope>
</reference>
<reference key="3">
    <citation type="journal article" date="2013" name="Nat. Genet.">
        <title>Oomycete pathogens encode RNA silencing suppressors.</title>
        <authorList>
            <person name="Qiao Y."/>
            <person name="Liu L."/>
            <person name="Xiong Q."/>
            <person name="Flores C."/>
            <person name="Wong J."/>
            <person name="Shi J."/>
            <person name="Wang X."/>
            <person name="Liu X."/>
            <person name="Xiang Q."/>
            <person name="Jiang S."/>
            <person name="Zhang F."/>
            <person name="Wang Y."/>
            <person name="Judelson H.S."/>
            <person name="Chen X."/>
            <person name="Ma W."/>
        </authorList>
    </citation>
    <scope>FUNCTION</scope>
    <scope>DISRUPTION PHENOTYPE</scope>
</reference>
<reference key="4">
    <citation type="journal article" date="2014" name="Mol. Plant Microbe Interact.">
        <title>Phytophthora suppressor of RNA silencing 2 is a conserved RxLR effector that promotes infection in soybean and Arabidopsis thaliana.</title>
        <authorList>
            <person name="Xiong Q."/>
            <person name="Ye W."/>
            <person name="Choi D."/>
            <person name="Wong J."/>
            <person name="Qiao Y."/>
            <person name="Tao K."/>
            <person name="Wang Y."/>
            <person name="Ma W."/>
        </authorList>
    </citation>
    <scope>FUNCTION</scope>
    <scope>INDUCTION</scope>
</reference>
<reference key="5">
    <citation type="journal article" date="2019" name="Cell Host Microbe">
        <title>A Phytophthora Effector Suppresses Trans-Kingdom RNAi to Promote Disease Susceptibility.</title>
        <authorList>
            <person name="Hou Y."/>
            <person name="Zhai Y."/>
            <person name="Feng L."/>
            <person name="Karimi H.Z."/>
            <person name="Rutter B.D."/>
            <person name="Zeng L."/>
            <person name="Choi D.S."/>
            <person name="Zhang B."/>
            <person name="Gu W."/>
            <person name="Chen X."/>
            <person name="Ye W."/>
            <person name="Innes R.W."/>
            <person name="Zhai J."/>
            <person name="Ma W."/>
        </authorList>
    </citation>
    <scope>FUNCTION</scope>
    <scope>DOMAIN</scope>
    <scope>INTERACTION WITH HOST DRB4</scope>
</reference>
<organism>
    <name type="scientific">Phytophthora sojae (strain P6497)</name>
    <name type="common">Soybean stem and root rot agent</name>
    <name type="synonym">Phytophthora megasperma f. sp. glycines</name>
    <dbReference type="NCBI Taxonomy" id="1094619"/>
    <lineage>
        <taxon>Eukaryota</taxon>
        <taxon>Sar</taxon>
        <taxon>Stramenopiles</taxon>
        <taxon>Oomycota</taxon>
        <taxon>Peronosporales</taxon>
        <taxon>Peronosporaceae</taxon>
        <taxon>Phytophthora</taxon>
    </lineage>
</organism>